<proteinExistence type="evidence at transcript level"/>
<accession>Q3E958</accession>
<accession>Q8GWK8</accession>
<dbReference type="EMBL" id="AC006258">
    <property type="status" value="NOT_ANNOTATED_CDS"/>
    <property type="molecule type" value="Genomic_DNA"/>
</dbReference>
<dbReference type="EMBL" id="CP002688">
    <property type="protein sequence ID" value="AED93434.1"/>
    <property type="molecule type" value="Genomic_DNA"/>
</dbReference>
<dbReference type="EMBL" id="CP002688">
    <property type="protein sequence ID" value="AED93435.1"/>
    <property type="molecule type" value="Genomic_DNA"/>
</dbReference>
<dbReference type="EMBL" id="AK118780">
    <property type="protein sequence ID" value="BAC43373.1"/>
    <property type="molecule type" value="mRNA"/>
</dbReference>
<dbReference type="EMBL" id="BT005461">
    <property type="protein sequence ID" value="AAO63881.1"/>
    <property type="molecule type" value="mRNA"/>
</dbReference>
<dbReference type="EMBL" id="BX834028">
    <property type="status" value="NOT_ANNOTATED_CDS"/>
    <property type="molecule type" value="mRNA"/>
</dbReference>
<dbReference type="RefSeq" id="NP_197921.1">
    <molecule id="Q3E958-1"/>
    <property type="nucleotide sequence ID" value="NM_122448.4"/>
</dbReference>
<dbReference type="RefSeq" id="NP_851073.1">
    <molecule id="Q3E958-2"/>
    <property type="nucleotide sequence ID" value="NM_180742.1"/>
</dbReference>
<dbReference type="SMR" id="Q3E958"/>
<dbReference type="BioGRID" id="17886">
    <property type="interactions" value="13"/>
</dbReference>
<dbReference type="FunCoup" id="Q3E958">
    <property type="interactions" value="21"/>
</dbReference>
<dbReference type="IntAct" id="Q3E958">
    <property type="interactions" value="13"/>
</dbReference>
<dbReference type="STRING" id="3702.Q3E958"/>
<dbReference type="PaxDb" id="3702-AT5G25390.2"/>
<dbReference type="ProteomicsDB" id="234535">
    <molecule id="Q3E958-1"/>
</dbReference>
<dbReference type="EnsemblPlants" id="AT5G25390.1">
    <molecule id="Q3E958-2"/>
    <property type="protein sequence ID" value="AT5G25390.1"/>
    <property type="gene ID" value="AT5G25390"/>
</dbReference>
<dbReference type="EnsemblPlants" id="AT5G25390.2">
    <molecule id="Q3E958-1"/>
    <property type="protein sequence ID" value="AT5G25390.2"/>
    <property type="gene ID" value="AT5G25390"/>
</dbReference>
<dbReference type="GeneID" id="832611"/>
<dbReference type="Gramene" id="AT5G25390.1">
    <molecule id="Q3E958-2"/>
    <property type="protein sequence ID" value="AT5G25390.1"/>
    <property type="gene ID" value="AT5G25390"/>
</dbReference>
<dbReference type="Gramene" id="AT5G25390.2">
    <molecule id="Q3E958-1"/>
    <property type="protein sequence ID" value="AT5G25390.2"/>
    <property type="gene ID" value="AT5G25390"/>
</dbReference>
<dbReference type="KEGG" id="ath:AT5G25390"/>
<dbReference type="Araport" id="AT5G25390"/>
<dbReference type="TAIR" id="AT5G25390">
    <property type="gene designation" value="SHN3"/>
</dbReference>
<dbReference type="eggNOG" id="ENOG502RXNN">
    <property type="taxonomic scope" value="Eukaryota"/>
</dbReference>
<dbReference type="HOGENOM" id="CLU_042594_3_0_1"/>
<dbReference type="InParanoid" id="Q3E958"/>
<dbReference type="OMA" id="EDHMAMQ"/>
<dbReference type="OrthoDB" id="1920676at2759"/>
<dbReference type="PhylomeDB" id="Q3E958"/>
<dbReference type="PRO" id="PR:Q3E958"/>
<dbReference type="Proteomes" id="UP000006548">
    <property type="component" value="Chromosome 5"/>
</dbReference>
<dbReference type="ExpressionAtlas" id="Q3E958">
    <property type="expression patterns" value="baseline and differential"/>
</dbReference>
<dbReference type="GO" id="GO:0005634">
    <property type="term" value="C:nucleus"/>
    <property type="evidence" value="ECO:0007669"/>
    <property type="project" value="UniProtKB-SubCell"/>
</dbReference>
<dbReference type="GO" id="GO:0003677">
    <property type="term" value="F:DNA binding"/>
    <property type="evidence" value="ECO:0007669"/>
    <property type="project" value="UniProtKB-KW"/>
</dbReference>
<dbReference type="GO" id="GO:0003700">
    <property type="term" value="F:DNA-binding transcription factor activity"/>
    <property type="evidence" value="ECO:0000314"/>
    <property type="project" value="TAIR"/>
</dbReference>
<dbReference type="GO" id="GO:0009873">
    <property type="term" value="P:ethylene-activated signaling pathway"/>
    <property type="evidence" value="ECO:0007669"/>
    <property type="project" value="UniProtKB-KW"/>
</dbReference>
<dbReference type="CDD" id="cd00018">
    <property type="entry name" value="AP2"/>
    <property type="match status" value="1"/>
</dbReference>
<dbReference type="FunFam" id="3.30.730.10:FF:000001">
    <property type="entry name" value="Ethylene-responsive transcription factor 2"/>
    <property type="match status" value="1"/>
</dbReference>
<dbReference type="Gene3D" id="3.30.730.10">
    <property type="entry name" value="AP2/ERF domain"/>
    <property type="match status" value="1"/>
</dbReference>
<dbReference type="InterPro" id="IPR001471">
    <property type="entry name" value="AP2/ERF_dom"/>
</dbReference>
<dbReference type="InterPro" id="IPR036955">
    <property type="entry name" value="AP2/ERF_dom_sf"/>
</dbReference>
<dbReference type="InterPro" id="IPR050913">
    <property type="entry name" value="AP2/ERF_ERF_subfamily"/>
</dbReference>
<dbReference type="InterPro" id="IPR016177">
    <property type="entry name" value="DNA-bd_dom_sf"/>
</dbReference>
<dbReference type="PANTHER" id="PTHR31194:SF190">
    <property type="entry name" value="ETHYLENE-RESPONSIVE TRANSCRIPTION FACTOR SHINE 3"/>
    <property type="match status" value="1"/>
</dbReference>
<dbReference type="PANTHER" id="PTHR31194">
    <property type="entry name" value="SHN SHINE , DNA BINDING / TRANSCRIPTION FACTOR"/>
    <property type="match status" value="1"/>
</dbReference>
<dbReference type="Pfam" id="PF00847">
    <property type="entry name" value="AP2"/>
    <property type="match status" value="1"/>
</dbReference>
<dbReference type="PRINTS" id="PR00367">
    <property type="entry name" value="ETHRSPELEMNT"/>
</dbReference>
<dbReference type="SMART" id="SM00380">
    <property type="entry name" value="AP2"/>
    <property type="match status" value="1"/>
</dbReference>
<dbReference type="SUPFAM" id="SSF54171">
    <property type="entry name" value="DNA-binding domain"/>
    <property type="match status" value="1"/>
</dbReference>
<dbReference type="PROSITE" id="PS51032">
    <property type="entry name" value="AP2_ERF"/>
    <property type="match status" value="1"/>
</dbReference>
<reference key="1">
    <citation type="journal article" date="2000" name="Nature">
        <title>Sequence and analysis of chromosome 5 of the plant Arabidopsis thaliana.</title>
        <authorList>
            <person name="Tabata S."/>
            <person name="Kaneko T."/>
            <person name="Nakamura Y."/>
            <person name="Kotani H."/>
            <person name="Kato T."/>
            <person name="Asamizu E."/>
            <person name="Miyajima N."/>
            <person name="Sasamoto S."/>
            <person name="Kimura T."/>
            <person name="Hosouchi T."/>
            <person name="Kawashima K."/>
            <person name="Kohara M."/>
            <person name="Matsumoto M."/>
            <person name="Matsuno A."/>
            <person name="Muraki A."/>
            <person name="Nakayama S."/>
            <person name="Nakazaki N."/>
            <person name="Naruo K."/>
            <person name="Okumura S."/>
            <person name="Shinpo S."/>
            <person name="Takeuchi C."/>
            <person name="Wada T."/>
            <person name="Watanabe A."/>
            <person name="Yamada M."/>
            <person name="Yasuda M."/>
            <person name="Sato S."/>
            <person name="de la Bastide M."/>
            <person name="Huang E."/>
            <person name="Spiegel L."/>
            <person name="Gnoj L."/>
            <person name="O'Shaughnessy A."/>
            <person name="Preston R."/>
            <person name="Habermann K."/>
            <person name="Murray J."/>
            <person name="Johnson D."/>
            <person name="Rohlfing T."/>
            <person name="Nelson J."/>
            <person name="Stoneking T."/>
            <person name="Pepin K."/>
            <person name="Spieth J."/>
            <person name="Sekhon M."/>
            <person name="Armstrong J."/>
            <person name="Becker M."/>
            <person name="Belter E."/>
            <person name="Cordum H."/>
            <person name="Cordes M."/>
            <person name="Courtney L."/>
            <person name="Courtney W."/>
            <person name="Dante M."/>
            <person name="Du H."/>
            <person name="Edwards J."/>
            <person name="Fryman J."/>
            <person name="Haakensen B."/>
            <person name="Lamar E."/>
            <person name="Latreille P."/>
            <person name="Leonard S."/>
            <person name="Meyer R."/>
            <person name="Mulvaney E."/>
            <person name="Ozersky P."/>
            <person name="Riley A."/>
            <person name="Strowmatt C."/>
            <person name="Wagner-McPherson C."/>
            <person name="Wollam A."/>
            <person name="Yoakum M."/>
            <person name="Bell M."/>
            <person name="Dedhia N."/>
            <person name="Parnell L."/>
            <person name="Shah R."/>
            <person name="Rodriguez M."/>
            <person name="Hoon See L."/>
            <person name="Vil D."/>
            <person name="Baker J."/>
            <person name="Kirchoff K."/>
            <person name="Toth K."/>
            <person name="King L."/>
            <person name="Bahret A."/>
            <person name="Miller B."/>
            <person name="Marra M.A."/>
            <person name="Martienssen R."/>
            <person name="McCombie W.R."/>
            <person name="Wilson R.K."/>
            <person name="Murphy G."/>
            <person name="Bancroft I."/>
            <person name="Volckaert G."/>
            <person name="Wambutt R."/>
            <person name="Duesterhoeft A."/>
            <person name="Stiekema W."/>
            <person name="Pohl T."/>
            <person name="Entian K.-D."/>
            <person name="Terryn N."/>
            <person name="Hartley N."/>
            <person name="Bent E."/>
            <person name="Johnson S."/>
            <person name="Langham S.-A."/>
            <person name="McCullagh B."/>
            <person name="Robben J."/>
            <person name="Grymonprez B."/>
            <person name="Zimmermann W."/>
            <person name="Ramsperger U."/>
            <person name="Wedler H."/>
            <person name="Balke K."/>
            <person name="Wedler E."/>
            <person name="Peters S."/>
            <person name="van Staveren M."/>
            <person name="Dirkse W."/>
            <person name="Mooijman P."/>
            <person name="Klein Lankhorst R."/>
            <person name="Weitzenegger T."/>
            <person name="Bothe G."/>
            <person name="Rose M."/>
            <person name="Hauf J."/>
            <person name="Berneiser S."/>
            <person name="Hempel S."/>
            <person name="Feldpausch M."/>
            <person name="Lamberth S."/>
            <person name="Villarroel R."/>
            <person name="Gielen J."/>
            <person name="Ardiles W."/>
            <person name="Bents O."/>
            <person name="Lemcke K."/>
            <person name="Kolesov G."/>
            <person name="Mayer K.F.X."/>
            <person name="Rudd S."/>
            <person name="Schoof H."/>
            <person name="Schueller C."/>
            <person name="Zaccaria P."/>
            <person name="Mewes H.-W."/>
            <person name="Bevan M."/>
            <person name="Fransz P.F."/>
        </authorList>
    </citation>
    <scope>NUCLEOTIDE SEQUENCE [LARGE SCALE GENOMIC DNA]</scope>
    <source>
        <strain>cv. Columbia</strain>
    </source>
</reference>
<reference key="2">
    <citation type="journal article" date="2017" name="Plant J.">
        <title>Araport11: a complete reannotation of the Arabidopsis thaliana reference genome.</title>
        <authorList>
            <person name="Cheng C.Y."/>
            <person name="Krishnakumar V."/>
            <person name="Chan A.P."/>
            <person name="Thibaud-Nissen F."/>
            <person name="Schobel S."/>
            <person name="Town C.D."/>
        </authorList>
    </citation>
    <scope>GENOME REANNOTATION</scope>
    <source>
        <strain>cv. Columbia</strain>
    </source>
</reference>
<reference key="3">
    <citation type="journal article" date="2002" name="Science">
        <title>Functional annotation of a full-length Arabidopsis cDNA collection.</title>
        <authorList>
            <person name="Seki M."/>
            <person name="Narusaka M."/>
            <person name="Kamiya A."/>
            <person name="Ishida J."/>
            <person name="Satou M."/>
            <person name="Sakurai T."/>
            <person name="Nakajima M."/>
            <person name="Enju A."/>
            <person name="Akiyama K."/>
            <person name="Oono Y."/>
            <person name="Muramatsu M."/>
            <person name="Hayashizaki Y."/>
            <person name="Kawai J."/>
            <person name="Carninci P."/>
            <person name="Itoh M."/>
            <person name="Ishii Y."/>
            <person name="Arakawa T."/>
            <person name="Shibata K."/>
            <person name="Shinagawa A."/>
            <person name="Shinozaki K."/>
        </authorList>
    </citation>
    <scope>NUCLEOTIDE SEQUENCE [LARGE SCALE MRNA] (ISOFORM 2)</scope>
    <source>
        <strain>cv. Columbia</strain>
    </source>
</reference>
<reference key="4">
    <citation type="journal article" date="2003" name="Science">
        <title>Empirical analysis of transcriptional activity in the Arabidopsis genome.</title>
        <authorList>
            <person name="Yamada K."/>
            <person name="Lim J."/>
            <person name="Dale J.M."/>
            <person name="Chen H."/>
            <person name="Shinn P."/>
            <person name="Palm C.J."/>
            <person name="Southwick A.M."/>
            <person name="Wu H.C."/>
            <person name="Kim C.J."/>
            <person name="Nguyen M."/>
            <person name="Pham P.K."/>
            <person name="Cheuk R.F."/>
            <person name="Karlin-Newmann G."/>
            <person name="Liu S.X."/>
            <person name="Lam B."/>
            <person name="Sakano H."/>
            <person name="Wu T."/>
            <person name="Yu G."/>
            <person name="Miranda M."/>
            <person name="Quach H.L."/>
            <person name="Tripp M."/>
            <person name="Chang C.H."/>
            <person name="Lee J.M."/>
            <person name="Toriumi M.J."/>
            <person name="Chan M.M."/>
            <person name="Tang C.C."/>
            <person name="Onodera C.S."/>
            <person name="Deng J.M."/>
            <person name="Akiyama K."/>
            <person name="Ansari Y."/>
            <person name="Arakawa T."/>
            <person name="Banh J."/>
            <person name="Banno F."/>
            <person name="Bowser L."/>
            <person name="Brooks S.Y."/>
            <person name="Carninci P."/>
            <person name="Chao Q."/>
            <person name="Choy N."/>
            <person name="Enju A."/>
            <person name="Goldsmith A.D."/>
            <person name="Gurjal M."/>
            <person name="Hansen N.F."/>
            <person name="Hayashizaki Y."/>
            <person name="Johnson-Hopson C."/>
            <person name="Hsuan V.W."/>
            <person name="Iida K."/>
            <person name="Karnes M."/>
            <person name="Khan S."/>
            <person name="Koesema E."/>
            <person name="Ishida J."/>
            <person name="Jiang P.X."/>
            <person name="Jones T."/>
            <person name="Kawai J."/>
            <person name="Kamiya A."/>
            <person name="Meyers C."/>
            <person name="Nakajima M."/>
            <person name="Narusaka M."/>
            <person name="Seki M."/>
            <person name="Sakurai T."/>
            <person name="Satou M."/>
            <person name="Tamse R."/>
            <person name="Vaysberg M."/>
            <person name="Wallender E.K."/>
            <person name="Wong C."/>
            <person name="Yamamura Y."/>
            <person name="Yuan S."/>
            <person name="Shinozaki K."/>
            <person name="Davis R.W."/>
            <person name="Theologis A."/>
            <person name="Ecker J.R."/>
        </authorList>
    </citation>
    <scope>NUCLEOTIDE SEQUENCE [LARGE SCALE MRNA] (ISOFORM 2)</scope>
    <source>
        <strain>cv. Columbia</strain>
    </source>
</reference>
<reference key="5">
    <citation type="journal article" date="2004" name="Genome Res.">
        <title>Whole genome sequence comparisons and 'full-length' cDNA sequences: a combined approach to evaluate and improve Arabidopsis genome annotation.</title>
        <authorList>
            <person name="Castelli V."/>
            <person name="Aury J.-M."/>
            <person name="Jaillon O."/>
            <person name="Wincker P."/>
            <person name="Clepet C."/>
            <person name="Menard M."/>
            <person name="Cruaud C."/>
            <person name="Quetier F."/>
            <person name="Scarpelli C."/>
            <person name="Schaechter V."/>
            <person name="Temple G."/>
            <person name="Caboche M."/>
            <person name="Weissenbach J."/>
            <person name="Salanoubat M."/>
        </authorList>
    </citation>
    <scope>NUCLEOTIDE SEQUENCE [LARGE SCALE MRNA] (ISOFORM 1)</scope>
    <source>
        <strain>cv. Columbia</strain>
    </source>
</reference>
<reference key="6">
    <citation type="journal article" date="2004" name="Plant Cell">
        <title>The SHINE clade of AP2 domain transcription factors activates wax biosynthesis, alters cuticle properties, and confers drought tolerance when overexpressed in Arabidopsis.</title>
        <authorList>
            <person name="Aharoni A."/>
            <person name="Dixit S."/>
            <person name="Jetter R."/>
            <person name="Thoenes E."/>
            <person name="van Arkel G."/>
            <person name="Pereira A."/>
        </authorList>
    </citation>
    <scope>FUNCTION</scope>
    <scope>TISSUE SPECIFICITY</scope>
    <scope>INDUCTION</scope>
</reference>
<reference key="7">
    <citation type="journal article" date="2006" name="Plant Physiol.">
        <title>Genome-wide analysis of the ERF gene family in Arabidopsis and rice.</title>
        <authorList>
            <person name="Nakano T."/>
            <person name="Suzuki K."/>
            <person name="Fujimura T."/>
            <person name="Shinshi H."/>
        </authorList>
    </citation>
    <scope>GENE FAMILY</scope>
    <scope>NOMENCLATURE</scope>
</reference>
<gene>
    <name type="primary">SHN3</name>
    <name type="synonym">ERF005</name>
    <name type="ordered locus">At5g25390</name>
    <name type="ORF">F18G18.130</name>
</gene>
<protein>
    <recommendedName>
        <fullName>Ethylene-responsive transcription factor SHINE 3</fullName>
    </recommendedName>
</protein>
<comment type="function">
    <text evidence="1 3">Promotes cuticle formation by inducing the expression of enzymes involved in wax biosynthesis. Probably acts as a transcriptional activator. Binds to the GCC-box pathogenesis-related promoter element. May be involved in the regulation of gene expression by stress factors and by components of stress signal transduction pathways (By similarity).</text>
</comment>
<comment type="subcellular location">
    <subcellularLocation>
        <location evidence="6">Nucleus</location>
    </subcellularLocation>
</comment>
<comment type="alternative products">
    <event type="alternative splicing"/>
    <isoform>
        <id>Q3E958-1</id>
        <name>1</name>
        <sequence type="displayed"/>
    </isoform>
    <isoform>
        <id>Q3E958-2</id>
        <name>2</name>
        <sequence type="described" ref="VSP_027410"/>
    </isoform>
</comment>
<comment type="tissue specificity">
    <text evidence="3">Found in all organs, mostly in veins, epidermis and trichome bases. Specific expression in lateral root tips.</text>
</comment>
<comment type="induction">
    <text evidence="3">By wounding in cauline leaves, stems, and siliques, but not in rosette leaves.</text>
</comment>
<comment type="miscellaneous">
    <molecule>Isoform 2</molecule>
    <text evidence="6">May be due to a competing acceptor splice site.</text>
</comment>
<comment type="similarity">
    <text evidence="6">Belongs to the AP2/ERF transcription factor family. ERF subfamily.</text>
</comment>
<sequence length="189" mass="21254">MVHSKKFRGVRQRQWGSWVSEIRHPLLKRRVWLGTFDTAETAARAYDQAAVLMNGQSAKTNFPVIKSNGSNSLEINSALRSPKSLSELLNAKLRKNCKDQTPYLTCLRLDNDSSHIGVWQKRAGSKTSPNWVKLVELGDKVNARPGGDIETNKMKVRNEDVQEDDQMAMQMIEELLNWTCPGSGSIAQV</sequence>
<feature type="chain" id="PRO_0000297942" description="Ethylene-responsive transcription factor SHINE 3">
    <location>
        <begin position="1"/>
        <end position="189"/>
    </location>
</feature>
<feature type="DNA-binding region" description="AP2/ERF" evidence="2">
    <location>
        <begin position="6"/>
        <end position="63"/>
    </location>
</feature>
<feature type="splice variant" id="VSP_027410" description="In isoform 2." evidence="4 5">
    <location>
        <begin position="28"/>
        <end position="30"/>
    </location>
</feature>
<evidence type="ECO:0000250" key="1"/>
<evidence type="ECO:0000255" key="2">
    <source>
        <dbReference type="PROSITE-ProRule" id="PRU00366"/>
    </source>
</evidence>
<evidence type="ECO:0000269" key="3">
    <source>
    </source>
</evidence>
<evidence type="ECO:0000303" key="4">
    <source>
    </source>
</evidence>
<evidence type="ECO:0000303" key="5">
    <source>
    </source>
</evidence>
<evidence type="ECO:0000305" key="6"/>
<name>SHN3_ARATH</name>
<organism>
    <name type="scientific">Arabidopsis thaliana</name>
    <name type="common">Mouse-ear cress</name>
    <dbReference type="NCBI Taxonomy" id="3702"/>
    <lineage>
        <taxon>Eukaryota</taxon>
        <taxon>Viridiplantae</taxon>
        <taxon>Streptophyta</taxon>
        <taxon>Embryophyta</taxon>
        <taxon>Tracheophyta</taxon>
        <taxon>Spermatophyta</taxon>
        <taxon>Magnoliopsida</taxon>
        <taxon>eudicotyledons</taxon>
        <taxon>Gunneridae</taxon>
        <taxon>Pentapetalae</taxon>
        <taxon>rosids</taxon>
        <taxon>malvids</taxon>
        <taxon>Brassicales</taxon>
        <taxon>Brassicaceae</taxon>
        <taxon>Camelineae</taxon>
        <taxon>Arabidopsis</taxon>
    </lineage>
</organism>
<keyword id="KW-0010">Activator</keyword>
<keyword id="KW-0025">Alternative splicing</keyword>
<keyword id="KW-0238">DNA-binding</keyword>
<keyword id="KW-0936">Ethylene signaling pathway</keyword>
<keyword id="KW-0539">Nucleus</keyword>
<keyword id="KW-1185">Reference proteome</keyword>
<keyword id="KW-0346">Stress response</keyword>
<keyword id="KW-0804">Transcription</keyword>
<keyword id="KW-0805">Transcription regulation</keyword>